<evidence type="ECO:0000255" key="1">
    <source>
        <dbReference type="HAMAP-Rule" id="MF_00073"/>
    </source>
</evidence>
<gene>
    <name evidence="1" type="primary">nusB</name>
    <name type="ordered locus">CTC_01581</name>
</gene>
<feature type="chain" id="PRO_0000176531" description="Transcription antitermination protein NusB">
    <location>
        <begin position="1"/>
        <end position="153"/>
    </location>
</feature>
<reference key="1">
    <citation type="journal article" date="2003" name="Proc. Natl. Acad. Sci. U.S.A.">
        <title>The genome sequence of Clostridium tetani, the causative agent of tetanus disease.</title>
        <authorList>
            <person name="Brueggemann H."/>
            <person name="Baeumer S."/>
            <person name="Fricke W.F."/>
            <person name="Wiezer A."/>
            <person name="Liesegang H."/>
            <person name="Decker I."/>
            <person name="Herzberg C."/>
            <person name="Martinez-Arias R."/>
            <person name="Merkl R."/>
            <person name="Henne A."/>
            <person name="Gottschalk G."/>
        </authorList>
    </citation>
    <scope>NUCLEOTIDE SEQUENCE [LARGE SCALE GENOMIC DNA]</scope>
    <source>
        <strain>Massachusetts / E88</strain>
    </source>
</reference>
<protein>
    <recommendedName>
        <fullName evidence="1">Transcription antitermination protein NusB</fullName>
    </recommendedName>
    <alternativeName>
        <fullName evidence="1">Antitermination factor NusB</fullName>
    </alternativeName>
</protein>
<proteinExistence type="inferred from homology"/>
<sequence length="153" mass="17882">MKRKKSREMTMQLLFEMMIKKENYVEIINTLKEALTEEEDINSILGEKKEMDEERIDLDEVDLEYLIHTLKGVEENSKVLDEHIEKYLKNWTLNRLAKVDLAILRLCSYEILFSNEVPDNVAINEGVELAKKYGDDKSPAFINAVLDKIAKQM</sequence>
<accession>Q894G5</accession>
<comment type="function">
    <text evidence="1">Involved in transcription antitermination. Required for transcription of ribosomal RNA (rRNA) genes. Binds specifically to the boxA antiterminator sequence of the ribosomal RNA (rrn) operons.</text>
</comment>
<comment type="similarity">
    <text evidence="1">Belongs to the NusB family.</text>
</comment>
<keyword id="KW-1185">Reference proteome</keyword>
<keyword id="KW-0694">RNA-binding</keyword>
<keyword id="KW-0804">Transcription</keyword>
<keyword id="KW-0889">Transcription antitermination</keyword>
<keyword id="KW-0805">Transcription regulation</keyword>
<dbReference type="EMBL" id="AE015927">
    <property type="protein sequence ID" value="AAO36127.1"/>
    <property type="molecule type" value="Genomic_DNA"/>
</dbReference>
<dbReference type="RefSeq" id="WP_011099787.1">
    <property type="nucleotide sequence ID" value="NC_004557.1"/>
</dbReference>
<dbReference type="SMR" id="Q894G5"/>
<dbReference type="STRING" id="212717.CTC_01581"/>
<dbReference type="GeneID" id="24253821"/>
<dbReference type="KEGG" id="ctc:CTC_01581"/>
<dbReference type="HOGENOM" id="CLU_087843_3_1_9"/>
<dbReference type="OrthoDB" id="9811381at2"/>
<dbReference type="Proteomes" id="UP000001412">
    <property type="component" value="Chromosome"/>
</dbReference>
<dbReference type="GO" id="GO:0005829">
    <property type="term" value="C:cytosol"/>
    <property type="evidence" value="ECO:0007669"/>
    <property type="project" value="TreeGrafter"/>
</dbReference>
<dbReference type="GO" id="GO:0003723">
    <property type="term" value="F:RNA binding"/>
    <property type="evidence" value="ECO:0007669"/>
    <property type="project" value="UniProtKB-UniRule"/>
</dbReference>
<dbReference type="GO" id="GO:0006353">
    <property type="term" value="P:DNA-templated transcription termination"/>
    <property type="evidence" value="ECO:0007669"/>
    <property type="project" value="UniProtKB-UniRule"/>
</dbReference>
<dbReference type="GO" id="GO:0031564">
    <property type="term" value="P:transcription antitermination"/>
    <property type="evidence" value="ECO:0007669"/>
    <property type="project" value="UniProtKB-KW"/>
</dbReference>
<dbReference type="Gene3D" id="1.10.940.10">
    <property type="entry name" value="NusB-like"/>
    <property type="match status" value="1"/>
</dbReference>
<dbReference type="HAMAP" id="MF_00073">
    <property type="entry name" value="NusB"/>
    <property type="match status" value="1"/>
</dbReference>
<dbReference type="InterPro" id="IPR035926">
    <property type="entry name" value="NusB-like_sf"/>
</dbReference>
<dbReference type="InterPro" id="IPR011605">
    <property type="entry name" value="NusB_fam"/>
</dbReference>
<dbReference type="InterPro" id="IPR006027">
    <property type="entry name" value="NusB_RsmB_TIM44"/>
</dbReference>
<dbReference type="NCBIfam" id="TIGR01951">
    <property type="entry name" value="nusB"/>
    <property type="match status" value="1"/>
</dbReference>
<dbReference type="PANTHER" id="PTHR11078:SF3">
    <property type="entry name" value="ANTITERMINATION NUSB DOMAIN-CONTAINING PROTEIN"/>
    <property type="match status" value="1"/>
</dbReference>
<dbReference type="PANTHER" id="PTHR11078">
    <property type="entry name" value="N UTILIZATION SUBSTANCE PROTEIN B-RELATED"/>
    <property type="match status" value="1"/>
</dbReference>
<dbReference type="Pfam" id="PF01029">
    <property type="entry name" value="NusB"/>
    <property type="match status" value="1"/>
</dbReference>
<dbReference type="SUPFAM" id="SSF48013">
    <property type="entry name" value="NusB-like"/>
    <property type="match status" value="1"/>
</dbReference>
<name>NUSB_CLOTE</name>
<organism>
    <name type="scientific">Clostridium tetani (strain Massachusetts / E88)</name>
    <dbReference type="NCBI Taxonomy" id="212717"/>
    <lineage>
        <taxon>Bacteria</taxon>
        <taxon>Bacillati</taxon>
        <taxon>Bacillota</taxon>
        <taxon>Clostridia</taxon>
        <taxon>Eubacteriales</taxon>
        <taxon>Clostridiaceae</taxon>
        <taxon>Clostridium</taxon>
    </lineage>
</organism>